<gene>
    <name type="primary">Adh</name>
    <name type="synonym">Adh2</name>
</gene>
<dbReference type="EC" id="1.1.1.1"/>
<dbReference type="EMBL" id="M62742">
    <property type="protein sequence ID" value="AAA28327.1"/>
    <property type="molecule type" value="Genomic_DNA"/>
</dbReference>
<dbReference type="SMR" id="P25721"/>
<dbReference type="GO" id="GO:0005737">
    <property type="term" value="C:cytoplasm"/>
    <property type="evidence" value="ECO:0007669"/>
    <property type="project" value="TreeGrafter"/>
</dbReference>
<dbReference type="GO" id="GO:0004022">
    <property type="term" value="F:alcohol dehydrogenase (NAD+) activity"/>
    <property type="evidence" value="ECO:0007669"/>
    <property type="project" value="UniProtKB-EC"/>
</dbReference>
<dbReference type="GO" id="GO:0006066">
    <property type="term" value="P:alcohol metabolic process"/>
    <property type="evidence" value="ECO:0007669"/>
    <property type="project" value="InterPro"/>
</dbReference>
<dbReference type="CDD" id="cd05323">
    <property type="entry name" value="ADH_SDR_c_like"/>
    <property type="match status" value="1"/>
</dbReference>
<dbReference type="FunFam" id="3.40.50.720:FF:000302">
    <property type="entry name" value="Alcohol dehydrogenase"/>
    <property type="match status" value="1"/>
</dbReference>
<dbReference type="Gene3D" id="3.40.50.720">
    <property type="entry name" value="NAD(P)-binding Rossmann-like Domain"/>
    <property type="match status" value="1"/>
</dbReference>
<dbReference type="InterPro" id="IPR002425">
    <property type="entry name" value="ADH_Drosophila-type"/>
</dbReference>
<dbReference type="InterPro" id="IPR036291">
    <property type="entry name" value="NAD(P)-bd_dom_sf"/>
</dbReference>
<dbReference type="InterPro" id="IPR020904">
    <property type="entry name" value="Sc_DH/Rdtase_CS"/>
</dbReference>
<dbReference type="InterPro" id="IPR002347">
    <property type="entry name" value="SDR_fam"/>
</dbReference>
<dbReference type="PANTHER" id="PTHR44229">
    <property type="entry name" value="15-HYDROXYPROSTAGLANDIN DEHYDROGENASE [NAD(+)]"/>
    <property type="match status" value="1"/>
</dbReference>
<dbReference type="PANTHER" id="PTHR44229:SF8">
    <property type="entry name" value="ALCOHOL DEHYDROGENASE-RELATED"/>
    <property type="match status" value="1"/>
</dbReference>
<dbReference type="Pfam" id="PF00106">
    <property type="entry name" value="adh_short"/>
    <property type="match status" value="1"/>
</dbReference>
<dbReference type="PRINTS" id="PR01168">
    <property type="entry name" value="ALCDHDRGNASE"/>
</dbReference>
<dbReference type="PRINTS" id="PR01167">
    <property type="entry name" value="INSADHFAMILY"/>
</dbReference>
<dbReference type="PRINTS" id="PR00080">
    <property type="entry name" value="SDRFAMILY"/>
</dbReference>
<dbReference type="SUPFAM" id="SSF51735">
    <property type="entry name" value="NAD(P)-binding Rossmann-fold domains"/>
    <property type="match status" value="1"/>
</dbReference>
<dbReference type="PROSITE" id="PS00061">
    <property type="entry name" value="ADH_SHORT"/>
    <property type="match status" value="1"/>
</dbReference>
<accession>P25721</accession>
<protein>
    <recommendedName>
        <fullName>Alcohol dehydrogenase</fullName>
        <ecNumber>1.1.1.1</ecNumber>
    </recommendedName>
</protein>
<keyword id="KW-0520">NAD</keyword>
<keyword id="KW-0560">Oxidoreductase</keyword>
<proteinExistence type="inferred from homology"/>
<evidence type="ECO:0000250" key="1"/>
<evidence type="ECO:0000255" key="2">
    <source>
        <dbReference type="PROSITE-ProRule" id="PRU10001"/>
    </source>
</evidence>
<evidence type="ECO:0000305" key="3"/>
<sequence>MVIANKNIIFVAGLGGIGFDTSREIVKSGPKNLVILDRIENPAAIAELKALNPKVIVTFYPYDVTVPVAETTKLLKIIFDKLKTVDLLINGAGILDDYQIERTIAVNFTGTVNTTTAIMSFWDKRKGGPGGVIANICSVTGFNAIYQVPVYSASKAAALSFTNSLAKLAPITGVTAYSINPGITKTTLVHKFNSWLDVEPRVAELLLEHPTQTTLQCAQNFVKAIEANQNGAIWKLDLGRLEAIEWTKHWDSHI</sequence>
<feature type="initiator methionine" description="Removed" evidence="1">
    <location>
        <position position="1"/>
    </location>
</feature>
<feature type="chain" id="PRO_0000054483" description="Alcohol dehydrogenase">
    <location>
        <begin position="2"/>
        <end position="254"/>
    </location>
</feature>
<feature type="active site" description="Proton acceptor" evidence="2">
    <location>
        <position position="151"/>
    </location>
</feature>
<feature type="binding site" evidence="1">
    <location>
        <begin position="10"/>
        <end position="33"/>
    </location>
    <ligand>
        <name>NAD(+)</name>
        <dbReference type="ChEBI" id="CHEBI:57540"/>
    </ligand>
</feature>
<feature type="binding site" evidence="1">
    <location>
        <position position="138"/>
    </location>
    <ligand>
        <name>substrate</name>
    </ligand>
</feature>
<reference key="1">
    <citation type="submission" date="1991-07" db="EMBL/GenBank/DDBJ databases">
        <authorList>
            <person name="Dorit R.L."/>
            <person name="Ayala F.J. III"/>
            <person name="Gilbert W."/>
        </authorList>
    </citation>
    <scope>NUCLEOTIDE SEQUENCE [GENOMIC DNA]</scope>
</reference>
<organism>
    <name type="scientific">Drosophila mayaguana</name>
    <name type="common">Fruit fly</name>
    <dbReference type="NCBI Taxonomy" id="7268"/>
    <lineage>
        <taxon>Eukaryota</taxon>
        <taxon>Metazoa</taxon>
        <taxon>Ecdysozoa</taxon>
        <taxon>Arthropoda</taxon>
        <taxon>Hexapoda</taxon>
        <taxon>Insecta</taxon>
        <taxon>Pterygota</taxon>
        <taxon>Neoptera</taxon>
        <taxon>Endopterygota</taxon>
        <taxon>Diptera</taxon>
        <taxon>Brachycera</taxon>
        <taxon>Muscomorpha</taxon>
        <taxon>Ephydroidea</taxon>
        <taxon>Drosophilidae</taxon>
        <taxon>Drosophila</taxon>
        <taxon>mayaguana subcluster</taxon>
    </lineage>
</organism>
<comment type="catalytic activity">
    <reaction evidence="2">
        <text>a primary alcohol + NAD(+) = an aldehyde + NADH + H(+)</text>
        <dbReference type="Rhea" id="RHEA:10736"/>
        <dbReference type="ChEBI" id="CHEBI:15378"/>
        <dbReference type="ChEBI" id="CHEBI:15734"/>
        <dbReference type="ChEBI" id="CHEBI:17478"/>
        <dbReference type="ChEBI" id="CHEBI:57540"/>
        <dbReference type="ChEBI" id="CHEBI:57945"/>
        <dbReference type="EC" id="1.1.1.1"/>
    </reaction>
</comment>
<comment type="catalytic activity">
    <reaction evidence="2">
        <text>a secondary alcohol + NAD(+) = a ketone + NADH + H(+)</text>
        <dbReference type="Rhea" id="RHEA:10740"/>
        <dbReference type="ChEBI" id="CHEBI:15378"/>
        <dbReference type="ChEBI" id="CHEBI:17087"/>
        <dbReference type="ChEBI" id="CHEBI:35681"/>
        <dbReference type="ChEBI" id="CHEBI:57540"/>
        <dbReference type="ChEBI" id="CHEBI:57945"/>
        <dbReference type="EC" id="1.1.1.1"/>
    </reaction>
</comment>
<comment type="subunit">
    <text>Homodimer.</text>
</comment>
<comment type="similarity">
    <text evidence="3">Belongs to the short-chain dehydrogenases/reductases (SDR) family.</text>
</comment>
<name>ADH_DROMY</name>